<gene>
    <name evidence="1" type="primary">tsaD</name>
    <name type="synonym">gcp</name>
    <name type="ordered locus">SPO3854</name>
</gene>
<comment type="function">
    <text evidence="1">Required for the formation of a threonylcarbamoyl group on adenosine at position 37 (t(6)A37) in tRNAs that read codons beginning with adenine. Is involved in the transfer of the threonylcarbamoyl moiety of threonylcarbamoyl-AMP (TC-AMP) to the N6 group of A37, together with TsaE and TsaB. TsaD likely plays a direct catalytic role in this reaction.</text>
</comment>
<comment type="catalytic activity">
    <reaction evidence="1">
        <text>L-threonylcarbamoyladenylate + adenosine(37) in tRNA = N(6)-L-threonylcarbamoyladenosine(37) in tRNA + AMP + H(+)</text>
        <dbReference type="Rhea" id="RHEA:37059"/>
        <dbReference type="Rhea" id="RHEA-COMP:10162"/>
        <dbReference type="Rhea" id="RHEA-COMP:10163"/>
        <dbReference type="ChEBI" id="CHEBI:15378"/>
        <dbReference type="ChEBI" id="CHEBI:73682"/>
        <dbReference type="ChEBI" id="CHEBI:74411"/>
        <dbReference type="ChEBI" id="CHEBI:74418"/>
        <dbReference type="ChEBI" id="CHEBI:456215"/>
        <dbReference type="EC" id="2.3.1.234"/>
    </reaction>
</comment>
<comment type="cofactor">
    <cofactor evidence="1">
        <name>Fe(2+)</name>
        <dbReference type="ChEBI" id="CHEBI:29033"/>
    </cofactor>
    <text evidence="1">Binds 1 Fe(2+) ion per subunit.</text>
</comment>
<comment type="subcellular location">
    <subcellularLocation>
        <location evidence="1">Cytoplasm</location>
    </subcellularLocation>
</comment>
<comment type="similarity">
    <text evidence="1">Belongs to the KAE1 / TsaD family.</text>
</comment>
<name>TSAD_RUEPO</name>
<keyword id="KW-0012">Acyltransferase</keyword>
<keyword id="KW-0963">Cytoplasm</keyword>
<keyword id="KW-0408">Iron</keyword>
<keyword id="KW-0479">Metal-binding</keyword>
<keyword id="KW-1185">Reference proteome</keyword>
<keyword id="KW-0808">Transferase</keyword>
<keyword id="KW-0819">tRNA processing</keyword>
<sequence length="365" mass="37895">MAQTLTILGLESSCDDTAAAVVRQTEGQAAEILSSVVHGQADLHSAYGGVVPEIAARAHAEKLDICVRQALTEAGVSLTDLDAVAVTAGPGLIGGVMSGVMCAKGIAAATGLPLIGVNHLAGHALTPRLTDQIAYPYLMLLVSGGHCQYLIAHGPEQFSRLGGTIDDAPGEAFDKTARLLGLPQPGGPSVEGEARQGDPKRFRFPRPLLDRPDCDLSFSGLKTALMRMRDQLVGEKGGLTRQDRADLCAGFQAAVVDTLAEKTRRALTLYLDEAPAEPVVAVAGGVAANAAIRAALETVCAEAGARFTAPPLRLCTDNAAMIAYAGLERFRSGARDGLDLTARPRWPLDQSSPAMLGSGKKGAKA</sequence>
<dbReference type="EC" id="2.3.1.234" evidence="1"/>
<dbReference type="EMBL" id="CP000031">
    <property type="protein sequence ID" value="AAV97068.1"/>
    <property type="molecule type" value="Genomic_DNA"/>
</dbReference>
<dbReference type="RefSeq" id="WP_011049525.1">
    <property type="nucleotide sequence ID" value="NC_003911.12"/>
</dbReference>
<dbReference type="SMR" id="Q5LLR7"/>
<dbReference type="STRING" id="246200.SPO3854"/>
<dbReference type="PaxDb" id="246200-SPO3854"/>
<dbReference type="KEGG" id="sil:SPO3854"/>
<dbReference type="eggNOG" id="COG0533">
    <property type="taxonomic scope" value="Bacteria"/>
</dbReference>
<dbReference type="HOGENOM" id="CLU_023208_0_2_5"/>
<dbReference type="OrthoDB" id="9806197at2"/>
<dbReference type="Proteomes" id="UP000001023">
    <property type="component" value="Chromosome"/>
</dbReference>
<dbReference type="GO" id="GO:0005737">
    <property type="term" value="C:cytoplasm"/>
    <property type="evidence" value="ECO:0007669"/>
    <property type="project" value="UniProtKB-SubCell"/>
</dbReference>
<dbReference type="GO" id="GO:0005506">
    <property type="term" value="F:iron ion binding"/>
    <property type="evidence" value="ECO:0007669"/>
    <property type="project" value="UniProtKB-UniRule"/>
</dbReference>
<dbReference type="GO" id="GO:0061711">
    <property type="term" value="F:N(6)-L-threonylcarbamoyladenine synthase activity"/>
    <property type="evidence" value="ECO:0007669"/>
    <property type="project" value="UniProtKB-EC"/>
</dbReference>
<dbReference type="GO" id="GO:0002949">
    <property type="term" value="P:tRNA threonylcarbamoyladenosine modification"/>
    <property type="evidence" value="ECO:0007669"/>
    <property type="project" value="UniProtKB-UniRule"/>
</dbReference>
<dbReference type="CDD" id="cd24133">
    <property type="entry name" value="ASKHA_NBD_TsaD_bac"/>
    <property type="match status" value="1"/>
</dbReference>
<dbReference type="FunFam" id="3.30.420.40:FF:000012">
    <property type="entry name" value="tRNA N6-adenosine threonylcarbamoyltransferase"/>
    <property type="match status" value="1"/>
</dbReference>
<dbReference type="FunFam" id="3.30.420.40:FF:000040">
    <property type="entry name" value="tRNA N6-adenosine threonylcarbamoyltransferase"/>
    <property type="match status" value="1"/>
</dbReference>
<dbReference type="Gene3D" id="3.30.420.40">
    <property type="match status" value="2"/>
</dbReference>
<dbReference type="HAMAP" id="MF_01445">
    <property type="entry name" value="TsaD"/>
    <property type="match status" value="1"/>
</dbReference>
<dbReference type="InterPro" id="IPR043129">
    <property type="entry name" value="ATPase_NBD"/>
</dbReference>
<dbReference type="InterPro" id="IPR000905">
    <property type="entry name" value="Gcp-like_dom"/>
</dbReference>
<dbReference type="InterPro" id="IPR017861">
    <property type="entry name" value="KAE1/TsaD"/>
</dbReference>
<dbReference type="InterPro" id="IPR022450">
    <property type="entry name" value="TsaD"/>
</dbReference>
<dbReference type="NCBIfam" id="TIGR00329">
    <property type="entry name" value="gcp_kae1"/>
    <property type="match status" value="1"/>
</dbReference>
<dbReference type="NCBIfam" id="TIGR03723">
    <property type="entry name" value="T6A_TsaD_YgjD"/>
    <property type="match status" value="1"/>
</dbReference>
<dbReference type="PANTHER" id="PTHR11735">
    <property type="entry name" value="TRNA N6-ADENOSINE THREONYLCARBAMOYLTRANSFERASE"/>
    <property type="match status" value="1"/>
</dbReference>
<dbReference type="PANTHER" id="PTHR11735:SF6">
    <property type="entry name" value="TRNA N6-ADENOSINE THREONYLCARBAMOYLTRANSFERASE, MITOCHONDRIAL"/>
    <property type="match status" value="1"/>
</dbReference>
<dbReference type="Pfam" id="PF00814">
    <property type="entry name" value="TsaD"/>
    <property type="match status" value="1"/>
</dbReference>
<dbReference type="PRINTS" id="PR00789">
    <property type="entry name" value="OSIALOPTASE"/>
</dbReference>
<dbReference type="SUPFAM" id="SSF53067">
    <property type="entry name" value="Actin-like ATPase domain"/>
    <property type="match status" value="2"/>
</dbReference>
<evidence type="ECO:0000255" key="1">
    <source>
        <dbReference type="HAMAP-Rule" id="MF_01445"/>
    </source>
</evidence>
<evidence type="ECO:0000256" key="2">
    <source>
        <dbReference type="SAM" id="MobiDB-lite"/>
    </source>
</evidence>
<protein>
    <recommendedName>
        <fullName evidence="1">tRNA N6-adenosine threonylcarbamoyltransferase</fullName>
        <ecNumber evidence="1">2.3.1.234</ecNumber>
    </recommendedName>
    <alternativeName>
        <fullName evidence="1">N6-L-threonylcarbamoyladenine synthase</fullName>
        <shortName evidence="1">t(6)A synthase</shortName>
    </alternativeName>
    <alternativeName>
        <fullName evidence="1">t(6)A37 threonylcarbamoyladenosine biosynthesis protein TsaD</fullName>
    </alternativeName>
    <alternativeName>
        <fullName evidence="1">tRNA threonylcarbamoyladenosine biosynthesis protein TsaD</fullName>
    </alternativeName>
</protein>
<proteinExistence type="inferred from homology"/>
<accession>Q5LLR7</accession>
<organism>
    <name type="scientific">Ruegeria pomeroyi (strain ATCC 700808 / DSM 15171 / DSS-3)</name>
    <name type="common">Silicibacter pomeroyi</name>
    <dbReference type="NCBI Taxonomy" id="246200"/>
    <lineage>
        <taxon>Bacteria</taxon>
        <taxon>Pseudomonadati</taxon>
        <taxon>Pseudomonadota</taxon>
        <taxon>Alphaproteobacteria</taxon>
        <taxon>Rhodobacterales</taxon>
        <taxon>Roseobacteraceae</taxon>
        <taxon>Ruegeria</taxon>
    </lineage>
</organism>
<reference key="1">
    <citation type="journal article" date="2004" name="Nature">
        <title>Genome sequence of Silicibacter pomeroyi reveals adaptations to the marine environment.</title>
        <authorList>
            <person name="Moran M.A."/>
            <person name="Buchan A."/>
            <person name="Gonzalez J.M."/>
            <person name="Heidelberg J.F."/>
            <person name="Whitman W.B."/>
            <person name="Kiene R.P."/>
            <person name="Henriksen J.R."/>
            <person name="King G.M."/>
            <person name="Belas R."/>
            <person name="Fuqua C."/>
            <person name="Brinkac L.M."/>
            <person name="Lewis M."/>
            <person name="Johri S."/>
            <person name="Weaver B."/>
            <person name="Pai G."/>
            <person name="Eisen J.A."/>
            <person name="Rahe E."/>
            <person name="Sheldon W.M."/>
            <person name="Ye W."/>
            <person name="Miller T.R."/>
            <person name="Carlton J."/>
            <person name="Rasko D.A."/>
            <person name="Paulsen I.T."/>
            <person name="Ren Q."/>
            <person name="Daugherty S.C."/>
            <person name="DeBoy R.T."/>
            <person name="Dodson R.J."/>
            <person name="Durkin A.S."/>
            <person name="Madupu R."/>
            <person name="Nelson W.C."/>
            <person name="Sullivan S.A."/>
            <person name="Rosovitz M.J."/>
            <person name="Haft D.H."/>
            <person name="Selengut J."/>
            <person name="Ward N."/>
        </authorList>
    </citation>
    <scope>NUCLEOTIDE SEQUENCE [LARGE SCALE GENOMIC DNA]</scope>
    <source>
        <strain>ATCC 700808 / DSM 15171 / DSS-3</strain>
    </source>
</reference>
<reference key="2">
    <citation type="journal article" date="2014" name="Stand. Genomic Sci.">
        <title>An updated genome annotation for the model marine bacterium Ruegeria pomeroyi DSS-3.</title>
        <authorList>
            <person name="Rivers A.R."/>
            <person name="Smith C.B."/>
            <person name="Moran M.A."/>
        </authorList>
    </citation>
    <scope>GENOME REANNOTATION</scope>
    <source>
        <strain>ATCC 700808 / DSM 15171 / DSS-3</strain>
    </source>
</reference>
<feature type="chain" id="PRO_0000303539" description="tRNA N6-adenosine threonylcarbamoyltransferase">
    <location>
        <begin position="1"/>
        <end position="365"/>
    </location>
</feature>
<feature type="region of interest" description="Disordered" evidence="2">
    <location>
        <begin position="184"/>
        <end position="203"/>
    </location>
</feature>
<feature type="region of interest" description="Disordered" evidence="2">
    <location>
        <begin position="342"/>
        <end position="365"/>
    </location>
</feature>
<feature type="compositionally biased region" description="Basic and acidic residues" evidence="2">
    <location>
        <begin position="192"/>
        <end position="201"/>
    </location>
</feature>
<feature type="binding site" evidence="1">
    <location>
        <position position="119"/>
    </location>
    <ligand>
        <name>Fe cation</name>
        <dbReference type="ChEBI" id="CHEBI:24875"/>
    </ligand>
</feature>
<feature type="binding site" evidence="1">
    <location>
        <position position="123"/>
    </location>
    <ligand>
        <name>Fe cation</name>
        <dbReference type="ChEBI" id="CHEBI:24875"/>
    </ligand>
</feature>
<feature type="binding site" evidence="1">
    <location>
        <begin position="141"/>
        <end position="145"/>
    </location>
    <ligand>
        <name>substrate</name>
    </ligand>
</feature>
<feature type="binding site" evidence="1">
    <location>
        <position position="174"/>
    </location>
    <ligand>
        <name>substrate</name>
    </ligand>
</feature>
<feature type="binding site" evidence="1">
    <location>
        <position position="187"/>
    </location>
    <ligand>
        <name>substrate</name>
    </ligand>
</feature>
<feature type="binding site" evidence="1">
    <location>
        <position position="289"/>
    </location>
    <ligand>
        <name>substrate</name>
    </ligand>
</feature>
<feature type="binding site" evidence="1">
    <location>
        <position position="317"/>
    </location>
    <ligand>
        <name>Fe cation</name>
        <dbReference type="ChEBI" id="CHEBI:24875"/>
    </ligand>
</feature>